<protein>
    <recommendedName>
        <fullName evidence="1">dCTP deaminase</fullName>
        <ecNumber evidence="1">3.5.4.13</ecNumber>
    </recommendedName>
    <alternativeName>
        <fullName evidence="1">Deoxycytidine triphosphate deaminase</fullName>
    </alternativeName>
</protein>
<dbReference type="EC" id="3.5.4.13" evidence="1"/>
<dbReference type="EMBL" id="CP001396">
    <property type="protein sequence ID" value="ACR61765.1"/>
    <property type="molecule type" value="Genomic_DNA"/>
</dbReference>
<dbReference type="RefSeq" id="WP_001234768.1">
    <property type="nucleotide sequence ID" value="NC_012759.1"/>
</dbReference>
<dbReference type="SMR" id="C4ZSF3"/>
<dbReference type="KEGG" id="ebw:BWG_1855"/>
<dbReference type="HOGENOM" id="CLU_087476_2_0_6"/>
<dbReference type="UniPathway" id="UPA00610">
    <property type="reaction ID" value="UER00665"/>
</dbReference>
<dbReference type="GO" id="GO:0008829">
    <property type="term" value="F:dCTP deaminase activity"/>
    <property type="evidence" value="ECO:0007669"/>
    <property type="project" value="UniProtKB-UniRule"/>
</dbReference>
<dbReference type="GO" id="GO:0000166">
    <property type="term" value="F:nucleotide binding"/>
    <property type="evidence" value="ECO:0007669"/>
    <property type="project" value="UniProtKB-KW"/>
</dbReference>
<dbReference type="GO" id="GO:0006226">
    <property type="term" value="P:dUMP biosynthetic process"/>
    <property type="evidence" value="ECO:0007669"/>
    <property type="project" value="UniProtKB-UniPathway"/>
</dbReference>
<dbReference type="GO" id="GO:0006229">
    <property type="term" value="P:dUTP biosynthetic process"/>
    <property type="evidence" value="ECO:0007669"/>
    <property type="project" value="UniProtKB-UniRule"/>
</dbReference>
<dbReference type="GO" id="GO:0015949">
    <property type="term" value="P:nucleobase-containing small molecule interconversion"/>
    <property type="evidence" value="ECO:0007669"/>
    <property type="project" value="TreeGrafter"/>
</dbReference>
<dbReference type="CDD" id="cd07557">
    <property type="entry name" value="trimeric_dUTPase"/>
    <property type="match status" value="1"/>
</dbReference>
<dbReference type="FunFam" id="2.70.40.10:FF:000003">
    <property type="entry name" value="dCTP deaminase"/>
    <property type="match status" value="1"/>
</dbReference>
<dbReference type="Gene3D" id="2.70.40.10">
    <property type="match status" value="1"/>
</dbReference>
<dbReference type="HAMAP" id="MF_00146">
    <property type="entry name" value="dCTP_deaminase"/>
    <property type="match status" value="1"/>
</dbReference>
<dbReference type="InterPro" id="IPR011962">
    <property type="entry name" value="dCTP_deaminase"/>
</dbReference>
<dbReference type="InterPro" id="IPR036157">
    <property type="entry name" value="dUTPase-like_sf"/>
</dbReference>
<dbReference type="InterPro" id="IPR033704">
    <property type="entry name" value="dUTPase_trimeric"/>
</dbReference>
<dbReference type="NCBIfam" id="TIGR02274">
    <property type="entry name" value="dCTP_deam"/>
    <property type="match status" value="1"/>
</dbReference>
<dbReference type="PANTHER" id="PTHR42680">
    <property type="entry name" value="DCTP DEAMINASE"/>
    <property type="match status" value="1"/>
</dbReference>
<dbReference type="PANTHER" id="PTHR42680:SF3">
    <property type="entry name" value="DCTP DEAMINASE"/>
    <property type="match status" value="1"/>
</dbReference>
<dbReference type="Pfam" id="PF22769">
    <property type="entry name" value="DCD"/>
    <property type="match status" value="1"/>
</dbReference>
<dbReference type="SUPFAM" id="SSF51283">
    <property type="entry name" value="dUTPase-like"/>
    <property type="match status" value="1"/>
</dbReference>
<comment type="function">
    <text evidence="1">Catalyzes the deamination of dCTP to dUTP.</text>
</comment>
<comment type="catalytic activity">
    <reaction evidence="1">
        <text>dCTP + H2O + H(+) = dUTP + NH4(+)</text>
        <dbReference type="Rhea" id="RHEA:22680"/>
        <dbReference type="ChEBI" id="CHEBI:15377"/>
        <dbReference type="ChEBI" id="CHEBI:15378"/>
        <dbReference type="ChEBI" id="CHEBI:28938"/>
        <dbReference type="ChEBI" id="CHEBI:61481"/>
        <dbReference type="ChEBI" id="CHEBI:61555"/>
        <dbReference type="EC" id="3.5.4.13"/>
    </reaction>
</comment>
<comment type="pathway">
    <text evidence="1">Pyrimidine metabolism; dUMP biosynthesis; dUMP from dCTP (dUTP route): step 1/2.</text>
</comment>
<comment type="subunit">
    <text evidence="1">Homotrimer.</text>
</comment>
<comment type="similarity">
    <text evidence="1">Belongs to the dCTP deaminase family.</text>
</comment>
<organism>
    <name type="scientific">Escherichia coli (strain K12 / MC4100 / BW2952)</name>
    <dbReference type="NCBI Taxonomy" id="595496"/>
    <lineage>
        <taxon>Bacteria</taxon>
        <taxon>Pseudomonadati</taxon>
        <taxon>Pseudomonadota</taxon>
        <taxon>Gammaproteobacteria</taxon>
        <taxon>Enterobacterales</taxon>
        <taxon>Enterobacteriaceae</taxon>
        <taxon>Escherichia</taxon>
    </lineage>
</organism>
<proteinExistence type="inferred from homology"/>
<name>DCD_ECOBW</name>
<sequence length="193" mass="21249">MRLCDRDIEAWLDEGRLSINPRPPVERINGATVDVRLGNKFRTFRGHTAAFIDLSGPKDEVSAALDRVMSDEIVLDEGEAFYLHPGELALAVTLESVTLPADLVGWLDGRSSLARLGLMVHVTAHRIDPGWSGCIVLEFYNSGKLPLALRPGMLIGALSFEPLSGPAVRPYNRREDAKYRNQQGAVASRIDKD</sequence>
<reference key="1">
    <citation type="journal article" date="2009" name="J. Bacteriol.">
        <title>Genomic sequencing reveals regulatory mutations and recombinational events in the widely used MC4100 lineage of Escherichia coli K-12.</title>
        <authorList>
            <person name="Ferenci T."/>
            <person name="Zhou Z."/>
            <person name="Betteridge T."/>
            <person name="Ren Y."/>
            <person name="Liu Y."/>
            <person name="Feng L."/>
            <person name="Reeves P.R."/>
            <person name="Wang L."/>
        </authorList>
    </citation>
    <scope>NUCLEOTIDE SEQUENCE [LARGE SCALE GENOMIC DNA]</scope>
    <source>
        <strain>K12 / MC4100 / BW2952</strain>
    </source>
</reference>
<accession>C4ZSF3</accession>
<evidence type="ECO:0000255" key="1">
    <source>
        <dbReference type="HAMAP-Rule" id="MF_00146"/>
    </source>
</evidence>
<gene>
    <name evidence="1" type="primary">dcd</name>
    <name type="ordered locus">BWG_1855</name>
</gene>
<feature type="chain" id="PRO_1000203357" description="dCTP deaminase">
    <location>
        <begin position="1"/>
        <end position="193"/>
    </location>
</feature>
<feature type="active site" description="Proton donor/acceptor" evidence="1">
    <location>
        <position position="138"/>
    </location>
</feature>
<feature type="binding site" evidence="1">
    <location>
        <begin position="110"/>
        <end position="115"/>
    </location>
    <ligand>
        <name>dCTP</name>
        <dbReference type="ChEBI" id="CHEBI:61481"/>
    </ligand>
</feature>
<feature type="binding site" evidence="1">
    <location>
        <position position="128"/>
    </location>
    <ligand>
        <name>dCTP</name>
        <dbReference type="ChEBI" id="CHEBI:61481"/>
    </ligand>
</feature>
<feature type="binding site" evidence="1">
    <location>
        <begin position="136"/>
        <end position="138"/>
    </location>
    <ligand>
        <name>dCTP</name>
        <dbReference type="ChEBI" id="CHEBI:61481"/>
    </ligand>
</feature>
<feature type="binding site" evidence="1">
    <location>
        <position position="171"/>
    </location>
    <ligand>
        <name>dCTP</name>
        <dbReference type="ChEBI" id="CHEBI:61481"/>
    </ligand>
</feature>
<feature type="binding site" evidence="1">
    <location>
        <position position="178"/>
    </location>
    <ligand>
        <name>dCTP</name>
        <dbReference type="ChEBI" id="CHEBI:61481"/>
    </ligand>
</feature>
<feature type="binding site" evidence="1">
    <location>
        <position position="182"/>
    </location>
    <ligand>
        <name>dCTP</name>
        <dbReference type="ChEBI" id="CHEBI:61481"/>
    </ligand>
</feature>
<keyword id="KW-0378">Hydrolase</keyword>
<keyword id="KW-0546">Nucleotide metabolism</keyword>
<keyword id="KW-0547">Nucleotide-binding</keyword>